<comment type="function">
    <text evidence="1">Catalyzes the radical-mediated insertion of two sulfur atoms into the C-6 and C-8 positions of the octanoyl moiety bound to the lipoyl domains of lipoate-dependent enzymes, thereby converting the octanoylated domains into lipoylated derivatives.</text>
</comment>
<comment type="catalytic activity">
    <reaction evidence="1">
        <text>[[Fe-S] cluster scaffold protein carrying a second [4Fe-4S](2+) cluster] + N(6)-octanoyl-L-lysyl-[protein] + 2 oxidized [2Fe-2S]-[ferredoxin] + 2 S-adenosyl-L-methionine + 4 H(+) = [[Fe-S] cluster scaffold protein] + N(6)-[(R)-dihydrolipoyl]-L-lysyl-[protein] + 4 Fe(3+) + 2 hydrogen sulfide + 2 5'-deoxyadenosine + 2 L-methionine + 2 reduced [2Fe-2S]-[ferredoxin]</text>
        <dbReference type="Rhea" id="RHEA:16585"/>
        <dbReference type="Rhea" id="RHEA-COMP:9928"/>
        <dbReference type="Rhea" id="RHEA-COMP:10000"/>
        <dbReference type="Rhea" id="RHEA-COMP:10001"/>
        <dbReference type="Rhea" id="RHEA-COMP:10475"/>
        <dbReference type="Rhea" id="RHEA-COMP:14568"/>
        <dbReference type="Rhea" id="RHEA-COMP:14569"/>
        <dbReference type="ChEBI" id="CHEBI:15378"/>
        <dbReference type="ChEBI" id="CHEBI:17319"/>
        <dbReference type="ChEBI" id="CHEBI:29034"/>
        <dbReference type="ChEBI" id="CHEBI:29919"/>
        <dbReference type="ChEBI" id="CHEBI:33722"/>
        <dbReference type="ChEBI" id="CHEBI:33737"/>
        <dbReference type="ChEBI" id="CHEBI:33738"/>
        <dbReference type="ChEBI" id="CHEBI:57844"/>
        <dbReference type="ChEBI" id="CHEBI:59789"/>
        <dbReference type="ChEBI" id="CHEBI:78809"/>
        <dbReference type="ChEBI" id="CHEBI:83100"/>
        <dbReference type="EC" id="2.8.1.8"/>
    </reaction>
</comment>
<comment type="cofactor">
    <cofactor evidence="1">
        <name>[4Fe-4S] cluster</name>
        <dbReference type="ChEBI" id="CHEBI:49883"/>
    </cofactor>
    <text evidence="1">Binds 2 [4Fe-4S] clusters per subunit. One cluster is coordinated with 3 cysteines and an exchangeable S-adenosyl-L-methionine.</text>
</comment>
<comment type="pathway">
    <text evidence="1">Protein modification; protein lipoylation via endogenous pathway; protein N(6)-(lipoyl)lysine from octanoyl-[acyl-carrier-protein]: step 2/2.</text>
</comment>
<comment type="subcellular location">
    <subcellularLocation>
        <location evidence="1">Cytoplasm</location>
    </subcellularLocation>
</comment>
<comment type="similarity">
    <text evidence="1">Belongs to the radical SAM superfamily. Lipoyl synthase family.</text>
</comment>
<accession>Q1LTM3</accession>
<dbReference type="EC" id="2.8.1.8" evidence="1"/>
<dbReference type="EMBL" id="CP000238">
    <property type="protein sequence ID" value="ABF13976.1"/>
    <property type="molecule type" value="Genomic_DNA"/>
</dbReference>
<dbReference type="RefSeq" id="WP_011520424.1">
    <property type="nucleotide sequence ID" value="NC_007984.1"/>
</dbReference>
<dbReference type="SMR" id="Q1LTM3"/>
<dbReference type="STRING" id="374463.BCI_0238"/>
<dbReference type="KEGG" id="bci:BCI_0238"/>
<dbReference type="HOGENOM" id="CLU_033144_2_1_6"/>
<dbReference type="OrthoDB" id="9787898at2"/>
<dbReference type="UniPathway" id="UPA00538">
    <property type="reaction ID" value="UER00593"/>
</dbReference>
<dbReference type="Proteomes" id="UP000002427">
    <property type="component" value="Chromosome"/>
</dbReference>
<dbReference type="GO" id="GO:0005737">
    <property type="term" value="C:cytoplasm"/>
    <property type="evidence" value="ECO:0007669"/>
    <property type="project" value="UniProtKB-SubCell"/>
</dbReference>
<dbReference type="GO" id="GO:0051539">
    <property type="term" value="F:4 iron, 4 sulfur cluster binding"/>
    <property type="evidence" value="ECO:0007669"/>
    <property type="project" value="UniProtKB-UniRule"/>
</dbReference>
<dbReference type="GO" id="GO:0016992">
    <property type="term" value="F:lipoate synthase activity"/>
    <property type="evidence" value="ECO:0007669"/>
    <property type="project" value="UniProtKB-UniRule"/>
</dbReference>
<dbReference type="GO" id="GO:0046872">
    <property type="term" value="F:metal ion binding"/>
    <property type="evidence" value="ECO:0007669"/>
    <property type="project" value="UniProtKB-KW"/>
</dbReference>
<dbReference type="CDD" id="cd01335">
    <property type="entry name" value="Radical_SAM"/>
    <property type="match status" value="1"/>
</dbReference>
<dbReference type="FunFam" id="3.20.20.70:FF:000023">
    <property type="entry name" value="Lipoyl synthase"/>
    <property type="match status" value="1"/>
</dbReference>
<dbReference type="Gene3D" id="3.20.20.70">
    <property type="entry name" value="Aldolase class I"/>
    <property type="match status" value="1"/>
</dbReference>
<dbReference type="HAMAP" id="MF_00206">
    <property type="entry name" value="Lipoyl_synth"/>
    <property type="match status" value="1"/>
</dbReference>
<dbReference type="InterPro" id="IPR013785">
    <property type="entry name" value="Aldolase_TIM"/>
</dbReference>
<dbReference type="InterPro" id="IPR006638">
    <property type="entry name" value="Elp3/MiaA/NifB-like_rSAM"/>
</dbReference>
<dbReference type="InterPro" id="IPR003698">
    <property type="entry name" value="Lipoyl_synth"/>
</dbReference>
<dbReference type="InterPro" id="IPR007197">
    <property type="entry name" value="rSAM"/>
</dbReference>
<dbReference type="NCBIfam" id="TIGR00510">
    <property type="entry name" value="lipA"/>
    <property type="match status" value="1"/>
</dbReference>
<dbReference type="NCBIfam" id="NF004019">
    <property type="entry name" value="PRK05481.1"/>
    <property type="match status" value="1"/>
</dbReference>
<dbReference type="NCBIfam" id="NF009544">
    <property type="entry name" value="PRK12928.1"/>
    <property type="match status" value="1"/>
</dbReference>
<dbReference type="PANTHER" id="PTHR10949">
    <property type="entry name" value="LIPOYL SYNTHASE"/>
    <property type="match status" value="1"/>
</dbReference>
<dbReference type="PANTHER" id="PTHR10949:SF0">
    <property type="entry name" value="LIPOYL SYNTHASE, MITOCHONDRIAL"/>
    <property type="match status" value="1"/>
</dbReference>
<dbReference type="Pfam" id="PF04055">
    <property type="entry name" value="Radical_SAM"/>
    <property type="match status" value="1"/>
</dbReference>
<dbReference type="PIRSF" id="PIRSF005963">
    <property type="entry name" value="Lipoyl_synth"/>
    <property type="match status" value="1"/>
</dbReference>
<dbReference type="SFLD" id="SFLDF00271">
    <property type="entry name" value="lipoyl_synthase"/>
    <property type="match status" value="1"/>
</dbReference>
<dbReference type="SFLD" id="SFLDG01058">
    <property type="entry name" value="lipoyl_synthase_like"/>
    <property type="match status" value="1"/>
</dbReference>
<dbReference type="SMART" id="SM00729">
    <property type="entry name" value="Elp3"/>
    <property type="match status" value="1"/>
</dbReference>
<dbReference type="SUPFAM" id="SSF102114">
    <property type="entry name" value="Radical SAM enzymes"/>
    <property type="match status" value="1"/>
</dbReference>
<dbReference type="PROSITE" id="PS51918">
    <property type="entry name" value="RADICAL_SAM"/>
    <property type="match status" value="1"/>
</dbReference>
<evidence type="ECO:0000255" key="1">
    <source>
        <dbReference type="HAMAP-Rule" id="MF_00206"/>
    </source>
</evidence>
<evidence type="ECO:0000255" key="2">
    <source>
        <dbReference type="PROSITE-ProRule" id="PRU01266"/>
    </source>
</evidence>
<feature type="chain" id="PRO_0000325236" description="Lipoyl synthase">
    <location>
        <begin position="1"/>
        <end position="294"/>
    </location>
</feature>
<feature type="domain" description="Radical SAM core" evidence="2">
    <location>
        <begin position="53"/>
        <end position="270"/>
    </location>
</feature>
<feature type="binding site" evidence="1">
    <location>
        <position position="41"/>
    </location>
    <ligand>
        <name>[4Fe-4S] cluster</name>
        <dbReference type="ChEBI" id="CHEBI:49883"/>
        <label>1</label>
    </ligand>
</feature>
<feature type="binding site" evidence="1">
    <location>
        <position position="46"/>
    </location>
    <ligand>
        <name>[4Fe-4S] cluster</name>
        <dbReference type="ChEBI" id="CHEBI:49883"/>
        <label>1</label>
    </ligand>
</feature>
<feature type="binding site" evidence="1">
    <location>
        <position position="52"/>
    </location>
    <ligand>
        <name>[4Fe-4S] cluster</name>
        <dbReference type="ChEBI" id="CHEBI:49883"/>
        <label>1</label>
    </ligand>
</feature>
<feature type="binding site" evidence="1">
    <location>
        <position position="67"/>
    </location>
    <ligand>
        <name>[4Fe-4S] cluster</name>
        <dbReference type="ChEBI" id="CHEBI:49883"/>
        <label>2</label>
        <note>4Fe-4S-S-AdoMet</note>
    </ligand>
</feature>
<feature type="binding site" evidence="1">
    <location>
        <position position="71"/>
    </location>
    <ligand>
        <name>[4Fe-4S] cluster</name>
        <dbReference type="ChEBI" id="CHEBI:49883"/>
        <label>2</label>
        <note>4Fe-4S-S-AdoMet</note>
    </ligand>
</feature>
<feature type="binding site" evidence="1">
    <location>
        <position position="74"/>
    </location>
    <ligand>
        <name>[4Fe-4S] cluster</name>
        <dbReference type="ChEBI" id="CHEBI:49883"/>
        <label>2</label>
        <note>4Fe-4S-S-AdoMet</note>
    </ligand>
</feature>
<feature type="binding site" evidence="1">
    <location>
        <position position="281"/>
    </location>
    <ligand>
        <name>[4Fe-4S] cluster</name>
        <dbReference type="ChEBI" id="CHEBI:49883"/>
        <label>1</label>
    </ligand>
</feature>
<organism>
    <name type="scientific">Baumannia cicadellinicola subsp. Homalodisca coagulata</name>
    <dbReference type="NCBI Taxonomy" id="374463"/>
    <lineage>
        <taxon>Bacteria</taxon>
        <taxon>Pseudomonadati</taxon>
        <taxon>Pseudomonadota</taxon>
        <taxon>Gammaproteobacteria</taxon>
        <taxon>Candidatus Palibaumannia</taxon>
    </lineage>
</organism>
<keyword id="KW-0004">4Fe-4S</keyword>
<keyword id="KW-0963">Cytoplasm</keyword>
<keyword id="KW-0408">Iron</keyword>
<keyword id="KW-0411">Iron-sulfur</keyword>
<keyword id="KW-0479">Metal-binding</keyword>
<keyword id="KW-1185">Reference proteome</keyword>
<keyword id="KW-0949">S-adenosyl-L-methionine</keyword>
<keyword id="KW-0808">Transferase</keyword>
<name>LIPA_BAUCH</name>
<reference key="1">
    <citation type="journal article" date="2006" name="PLoS Biol.">
        <title>Metabolic complementarity and genomics of the dual bacterial symbiosis of sharpshooters.</title>
        <authorList>
            <person name="Wu D."/>
            <person name="Daugherty S.C."/>
            <person name="Van Aken S.E."/>
            <person name="Pai G.H."/>
            <person name="Watkins K.L."/>
            <person name="Khouri H."/>
            <person name="Tallon L.J."/>
            <person name="Zaborsky J.M."/>
            <person name="Dunbar H.E."/>
            <person name="Tran P.L."/>
            <person name="Moran N.A."/>
            <person name="Eisen J.A."/>
        </authorList>
    </citation>
    <scope>NUCLEOTIDE SEQUENCE [LARGE SCALE GENOMIC DNA]</scope>
</reference>
<proteinExistence type="inferred from homology"/>
<sequence length="294" mass="33591">MVKIEKKLHKPLWLKIKLPSSDYKIKVIKKTMNKSSLYTICEEACCPNLAECFNNGTATFMILGNICTRRCPFCNVAHGRPLIPDIHEPEKLAETITNMGLRYVVITSVNRDDLYDGGAQHFVDCIRAIRAKNSATRIEVLVPDFRGHMKTALEILNTSPPDVFNHNIENVPRLYRHIRPGADYHRSLKLLKKFKEYNPSLPTKSGLMMGLGETREEIIEVMRDLRQHNVTMLTLGQYLQPSSNHLPVQRYITPQEFNEMKLESLAMGFTYAACGPFVRSSYHADLQNKGIEVK</sequence>
<gene>
    <name evidence="1" type="primary">lipA</name>
    <name type="ordered locus">BCI_0238</name>
</gene>
<protein>
    <recommendedName>
        <fullName evidence="1">Lipoyl synthase</fullName>
        <ecNumber evidence="1">2.8.1.8</ecNumber>
    </recommendedName>
    <alternativeName>
        <fullName evidence="1">Lip-syn</fullName>
        <shortName evidence="1">LS</shortName>
    </alternativeName>
    <alternativeName>
        <fullName evidence="1">Lipoate synthase</fullName>
    </alternativeName>
    <alternativeName>
        <fullName evidence="1">Lipoic acid synthase</fullName>
    </alternativeName>
    <alternativeName>
        <fullName evidence="1">Sulfur insertion protein LipA</fullName>
    </alternativeName>
</protein>